<evidence type="ECO:0000250" key="1"/>
<evidence type="ECO:0000250" key="2">
    <source>
        <dbReference type="UniProtKB" id="P11511"/>
    </source>
</evidence>
<evidence type="ECO:0000305" key="3"/>
<name>CP19A_CALJA</name>
<organism>
    <name type="scientific">Callithrix jacchus</name>
    <name type="common">White-tufted-ear marmoset</name>
    <dbReference type="NCBI Taxonomy" id="9483"/>
    <lineage>
        <taxon>Eukaryota</taxon>
        <taxon>Metazoa</taxon>
        <taxon>Chordata</taxon>
        <taxon>Craniata</taxon>
        <taxon>Vertebrata</taxon>
        <taxon>Euteleostomi</taxon>
        <taxon>Mammalia</taxon>
        <taxon>Eutheria</taxon>
        <taxon>Euarchontoglires</taxon>
        <taxon>Primates</taxon>
        <taxon>Haplorrhini</taxon>
        <taxon>Platyrrhini</taxon>
        <taxon>Cebidae</taxon>
        <taxon>Callitrichinae</taxon>
        <taxon>Callithrix</taxon>
        <taxon>Callithrix</taxon>
    </lineage>
</organism>
<keyword id="KW-0349">Heme</keyword>
<keyword id="KW-0408">Iron</keyword>
<keyword id="KW-0443">Lipid metabolism</keyword>
<keyword id="KW-0472">Membrane</keyword>
<keyword id="KW-0479">Metal-binding</keyword>
<keyword id="KW-0503">Monooxygenase</keyword>
<keyword id="KW-0560">Oxidoreductase</keyword>
<keyword id="KW-1185">Reference proteome</keyword>
<proteinExistence type="evidence at transcript level"/>
<sequence>MVLEMLNPMHYNITSMVPEAMPAATMPILLLTGLFLLVWNYEGTSSIPGPGYCMGIGPLISHGRFLWMGIGNACNYYNRMYGEFMRVWISGEETLIISKSSSMFHVMKHNHYSSRFGSKLGLQCIGMHEKGIIFNNNPDLWKTTRPLFMKALSGPGLVRMVTVCAESLNTHLDRLEEVTNESGFIDVLTLLRCVMLDTSNTLFLRIPLDENAIVFKIQGYFDAWQALLIKPDIFFKISWLYKKYEKSVKDLKDAIEVLMAEKRRRISAEEKLEEHIDFATELILAEKRGDLTRENVNQCMLEMLIAAPDTMSVSLFFMLFLIAKHPNVEEAIMKEIQTVVGERDVKIDDIQKLKVVENFIYESMRYQPVVDLVMRKALEDDVIDGYPVKKGTNIILNIGRMHRLEFFPKPNEFTLENFAKNVPYRYFQPFGFGPRSCAGKYIAMVMMKSILVTLLRRFHVKTLGGECVESLQKTNDLALHPDHTKSMLEMIFTPRNSGWCLEH</sequence>
<comment type="function">
    <text evidence="1">Catalyzes the formation of aromatic C18 estrogens from C19 androgens.</text>
</comment>
<comment type="catalytic activity">
    <reaction evidence="2">
        <text>testosterone + 3 reduced [NADPH--hemoprotein reductase] + 3 O2 = 17beta-estradiol + formate + 3 oxidized [NADPH--hemoprotein reductase] + 4 H2O + 4 H(+)</text>
        <dbReference type="Rhea" id="RHEA:38191"/>
        <dbReference type="Rhea" id="RHEA-COMP:11964"/>
        <dbReference type="Rhea" id="RHEA-COMP:11965"/>
        <dbReference type="ChEBI" id="CHEBI:15377"/>
        <dbReference type="ChEBI" id="CHEBI:15378"/>
        <dbReference type="ChEBI" id="CHEBI:15379"/>
        <dbReference type="ChEBI" id="CHEBI:15740"/>
        <dbReference type="ChEBI" id="CHEBI:16469"/>
        <dbReference type="ChEBI" id="CHEBI:17347"/>
        <dbReference type="ChEBI" id="CHEBI:57618"/>
        <dbReference type="ChEBI" id="CHEBI:58210"/>
        <dbReference type="EC" id="1.14.14.14"/>
    </reaction>
</comment>
<comment type="catalytic activity">
    <reaction evidence="2">
        <text>androst-4-ene-3,17-dione + 3 reduced [NADPH--hemoprotein reductase] + 3 O2 = estrone + formate + 3 oxidized [NADPH--hemoprotein reductase] + 4 H2O + 4 H(+)</text>
        <dbReference type="Rhea" id="RHEA:38195"/>
        <dbReference type="Rhea" id="RHEA-COMP:11964"/>
        <dbReference type="Rhea" id="RHEA-COMP:11965"/>
        <dbReference type="ChEBI" id="CHEBI:15377"/>
        <dbReference type="ChEBI" id="CHEBI:15378"/>
        <dbReference type="ChEBI" id="CHEBI:15379"/>
        <dbReference type="ChEBI" id="CHEBI:15740"/>
        <dbReference type="ChEBI" id="CHEBI:16422"/>
        <dbReference type="ChEBI" id="CHEBI:17263"/>
        <dbReference type="ChEBI" id="CHEBI:57618"/>
        <dbReference type="ChEBI" id="CHEBI:58210"/>
        <dbReference type="EC" id="1.14.14.14"/>
    </reaction>
</comment>
<comment type="cofactor">
    <cofactor evidence="1">
        <name>heme</name>
        <dbReference type="ChEBI" id="CHEBI:30413"/>
    </cofactor>
</comment>
<comment type="subcellular location">
    <subcellularLocation>
        <location>Membrane</location>
        <topology>Peripheral membrane protein</topology>
    </subcellularLocation>
</comment>
<comment type="similarity">
    <text evidence="3">Belongs to the cytochrome P450 family.</text>
</comment>
<dbReference type="EC" id="1.14.14.14" evidence="2"/>
<dbReference type="EMBL" id="AY034779">
    <property type="protein sequence ID" value="AAK58465.2"/>
    <property type="molecule type" value="mRNA"/>
</dbReference>
<dbReference type="RefSeq" id="NP_001254691.1">
    <property type="nucleotide sequence ID" value="NM_001267762.1"/>
</dbReference>
<dbReference type="SMR" id="Q95M61"/>
<dbReference type="FunCoup" id="Q95M61">
    <property type="interactions" value="355"/>
</dbReference>
<dbReference type="STRING" id="9483.ENSCJAP00000002075"/>
<dbReference type="GeneID" id="100411557"/>
<dbReference type="KEGG" id="cjc:100411557"/>
<dbReference type="CTD" id="1588"/>
<dbReference type="eggNOG" id="KOG0157">
    <property type="taxonomic scope" value="Eukaryota"/>
</dbReference>
<dbReference type="InParanoid" id="Q95M61"/>
<dbReference type="OrthoDB" id="1470350at2759"/>
<dbReference type="Proteomes" id="UP000008225">
    <property type="component" value="Unplaced"/>
</dbReference>
<dbReference type="GO" id="GO:0005783">
    <property type="term" value="C:endoplasmic reticulum"/>
    <property type="evidence" value="ECO:0007669"/>
    <property type="project" value="TreeGrafter"/>
</dbReference>
<dbReference type="GO" id="GO:0016020">
    <property type="term" value="C:membrane"/>
    <property type="evidence" value="ECO:0007669"/>
    <property type="project" value="UniProtKB-SubCell"/>
</dbReference>
<dbReference type="GO" id="GO:0070330">
    <property type="term" value="F:aromatase activity"/>
    <property type="evidence" value="ECO:0000250"/>
    <property type="project" value="UniProtKB"/>
</dbReference>
<dbReference type="GO" id="GO:0020037">
    <property type="term" value="F:heme binding"/>
    <property type="evidence" value="ECO:0000250"/>
    <property type="project" value="UniProtKB"/>
</dbReference>
<dbReference type="GO" id="GO:0005506">
    <property type="term" value="F:iron ion binding"/>
    <property type="evidence" value="ECO:0007669"/>
    <property type="project" value="InterPro"/>
</dbReference>
<dbReference type="GO" id="GO:0008585">
    <property type="term" value="P:female gonad development"/>
    <property type="evidence" value="ECO:0007669"/>
    <property type="project" value="TreeGrafter"/>
</dbReference>
<dbReference type="GO" id="GO:0006629">
    <property type="term" value="P:lipid metabolic process"/>
    <property type="evidence" value="ECO:0007669"/>
    <property type="project" value="UniProtKB-KW"/>
</dbReference>
<dbReference type="GO" id="GO:0032355">
    <property type="term" value="P:response to estradiol"/>
    <property type="evidence" value="ECO:0007669"/>
    <property type="project" value="TreeGrafter"/>
</dbReference>
<dbReference type="CDD" id="cd20616">
    <property type="entry name" value="CYP19A1"/>
    <property type="match status" value="1"/>
</dbReference>
<dbReference type="FunFam" id="1.10.630.10:FF:000032">
    <property type="entry name" value="Cytochrome P450 aromatase"/>
    <property type="match status" value="1"/>
</dbReference>
<dbReference type="Gene3D" id="1.10.630.10">
    <property type="entry name" value="Cytochrome P450"/>
    <property type="match status" value="1"/>
</dbReference>
<dbReference type="InterPro" id="IPR001128">
    <property type="entry name" value="Cyt_P450"/>
</dbReference>
<dbReference type="InterPro" id="IPR017972">
    <property type="entry name" value="Cyt_P450_CS"/>
</dbReference>
<dbReference type="InterPro" id="IPR002401">
    <property type="entry name" value="Cyt_P450_E_grp-I"/>
</dbReference>
<dbReference type="InterPro" id="IPR036396">
    <property type="entry name" value="Cyt_P450_sf"/>
</dbReference>
<dbReference type="InterPro" id="IPR050196">
    <property type="entry name" value="Cytochrome_P450_Monoox"/>
</dbReference>
<dbReference type="PANTHER" id="PTHR24291:SF43">
    <property type="entry name" value="AROMATASE"/>
    <property type="match status" value="1"/>
</dbReference>
<dbReference type="PANTHER" id="PTHR24291">
    <property type="entry name" value="CYTOCHROME P450 FAMILY 4"/>
    <property type="match status" value="1"/>
</dbReference>
<dbReference type="Pfam" id="PF00067">
    <property type="entry name" value="p450"/>
    <property type="match status" value="1"/>
</dbReference>
<dbReference type="PRINTS" id="PR00463">
    <property type="entry name" value="EP450I"/>
</dbReference>
<dbReference type="PRINTS" id="PR00385">
    <property type="entry name" value="P450"/>
</dbReference>
<dbReference type="SUPFAM" id="SSF48264">
    <property type="entry name" value="Cytochrome P450"/>
    <property type="match status" value="1"/>
</dbReference>
<dbReference type="PROSITE" id="PS00086">
    <property type="entry name" value="CYTOCHROME_P450"/>
    <property type="match status" value="1"/>
</dbReference>
<protein>
    <recommendedName>
        <fullName>Aromatase</fullName>
        <ecNumber evidence="2">1.14.14.14</ecNumber>
    </recommendedName>
    <alternativeName>
        <fullName>CYPXIX</fullName>
    </alternativeName>
    <alternativeName>
        <fullName>Cytochrome P-450AROM</fullName>
    </alternativeName>
    <alternativeName>
        <fullName>Cytochrome P450 19A1</fullName>
    </alternativeName>
    <alternativeName>
        <fullName>Estrogen synthase</fullName>
    </alternativeName>
</protein>
<reference key="1">
    <citation type="submission" date="2002-06" db="EMBL/GenBank/DDBJ databases">
        <title>Regulation of 17-beta-hydroxysteroid dehydrogenases type 1 and type 7 during pregnancy in the marmoset monkey.</title>
        <authorList>
            <person name="Husen B."/>
            <person name="Einspanier A."/>
        </authorList>
    </citation>
    <scope>NUCLEOTIDE SEQUENCE [MRNA]</scope>
</reference>
<feature type="chain" id="PRO_0000051951" description="Aromatase">
    <location>
        <begin position="1"/>
        <end position="503"/>
    </location>
</feature>
<feature type="binding site" evidence="1">
    <location>
        <position position="309"/>
    </location>
    <ligand>
        <name>substrate</name>
    </ligand>
</feature>
<feature type="binding site" evidence="1">
    <location>
        <position position="374"/>
    </location>
    <ligand>
        <name>substrate</name>
    </ligand>
</feature>
<feature type="binding site" description="axial binding residue" evidence="1">
    <location>
        <position position="437"/>
    </location>
    <ligand>
        <name>heme</name>
        <dbReference type="ChEBI" id="CHEBI:30413"/>
    </ligand>
    <ligandPart>
        <name>Fe</name>
        <dbReference type="ChEBI" id="CHEBI:18248"/>
    </ligandPart>
</feature>
<gene>
    <name type="primary">CYP19A1</name>
    <name type="synonym">CYP19</name>
</gene>
<accession>Q95M61</accession>